<protein>
    <recommendedName>
        <fullName evidence="1">tRNA (guanine-N(1)-)-methyltransferase</fullName>
        <ecNumber evidence="1">2.1.1.228</ecNumber>
    </recommendedName>
    <alternativeName>
        <fullName evidence="1">M1G-methyltransferase</fullName>
    </alternativeName>
    <alternativeName>
        <fullName evidence="1">tRNA [GM37] methyltransferase</fullName>
    </alternativeName>
</protein>
<organism>
    <name type="scientific">Clostridium tetani (strain Massachusetts / E88)</name>
    <dbReference type="NCBI Taxonomy" id="212717"/>
    <lineage>
        <taxon>Bacteria</taxon>
        <taxon>Bacillati</taxon>
        <taxon>Bacillota</taxon>
        <taxon>Clostridia</taxon>
        <taxon>Eubacteriales</taxon>
        <taxon>Clostridiaceae</taxon>
        <taxon>Clostridium</taxon>
    </lineage>
</organism>
<sequence length="239" mass="27648">MAFRIDILTLFPDMFNIFNHSIMGKALEKDIININTINIRDFTEDKHKKVDDYPYGGGAGMVMSLQPIVDSLKRVKESNRGKVIFLGPRGKTFSHEMAKELSKEEELIFLCGHYEGIDERCYDYIDLEISLGDFILTGGEMACIPIVDSICRLIPGVLGKNESFMEESFYEGLLEYPHYTRPENFKGKEVPKILLSGHHENIRKWRKSKSLKITKKRRPDLFKKYNLTKEDEKLLSSEE</sequence>
<accession>Q895M2</accession>
<name>TRMD_CLOTE</name>
<proteinExistence type="inferred from homology"/>
<feature type="chain" id="PRO_0000060362" description="tRNA (guanine-N(1)-)-methyltransferase">
    <location>
        <begin position="1"/>
        <end position="239"/>
    </location>
</feature>
<feature type="binding site" evidence="1">
    <location>
        <position position="112"/>
    </location>
    <ligand>
        <name>S-adenosyl-L-methionine</name>
        <dbReference type="ChEBI" id="CHEBI:59789"/>
    </ligand>
</feature>
<feature type="binding site" evidence="1">
    <location>
        <begin position="131"/>
        <end position="136"/>
    </location>
    <ligand>
        <name>S-adenosyl-L-methionine</name>
        <dbReference type="ChEBI" id="CHEBI:59789"/>
    </ligand>
</feature>
<gene>
    <name evidence="1" type="primary">trmD</name>
    <name type="ordered locus">CTC_01251</name>
</gene>
<comment type="function">
    <text evidence="1">Specifically methylates guanosine-37 in various tRNAs.</text>
</comment>
<comment type="catalytic activity">
    <reaction evidence="1">
        <text>guanosine(37) in tRNA + S-adenosyl-L-methionine = N(1)-methylguanosine(37) in tRNA + S-adenosyl-L-homocysteine + H(+)</text>
        <dbReference type="Rhea" id="RHEA:36899"/>
        <dbReference type="Rhea" id="RHEA-COMP:10145"/>
        <dbReference type="Rhea" id="RHEA-COMP:10147"/>
        <dbReference type="ChEBI" id="CHEBI:15378"/>
        <dbReference type="ChEBI" id="CHEBI:57856"/>
        <dbReference type="ChEBI" id="CHEBI:59789"/>
        <dbReference type="ChEBI" id="CHEBI:73542"/>
        <dbReference type="ChEBI" id="CHEBI:74269"/>
        <dbReference type="EC" id="2.1.1.228"/>
    </reaction>
</comment>
<comment type="subunit">
    <text evidence="1">Homodimer.</text>
</comment>
<comment type="subcellular location">
    <subcellularLocation>
        <location evidence="1">Cytoplasm</location>
    </subcellularLocation>
</comment>
<comment type="similarity">
    <text evidence="1">Belongs to the RNA methyltransferase TrmD family.</text>
</comment>
<dbReference type="EC" id="2.1.1.228" evidence="1"/>
<dbReference type="EMBL" id="AE015927">
    <property type="protein sequence ID" value="AAO35818.1"/>
    <property type="molecule type" value="Genomic_DNA"/>
</dbReference>
<dbReference type="RefSeq" id="WP_011099480.1">
    <property type="nucleotide sequence ID" value="NC_004557.1"/>
</dbReference>
<dbReference type="SMR" id="Q895M2"/>
<dbReference type="STRING" id="212717.CTC_01251"/>
<dbReference type="GeneID" id="24253655"/>
<dbReference type="KEGG" id="ctc:CTC_01251"/>
<dbReference type="HOGENOM" id="CLU_047363_0_1_9"/>
<dbReference type="OrthoDB" id="9807416at2"/>
<dbReference type="Proteomes" id="UP000001412">
    <property type="component" value="Chromosome"/>
</dbReference>
<dbReference type="GO" id="GO:0005829">
    <property type="term" value="C:cytosol"/>
    <property type="evidence" value="ECO:0007669"/>
    <property type="project" value="TreeGrafter"/>
</dbReference>
<dbReference type="GO" id="GO:0052906">
    <property type="term" value="F:tRNA (guanine(37)-N1)-methyltransferase activity"/>
    <property type="evidence" value="ECO:0007669"/>
    <property type="project" value="UniProtKB-UniRule"/>
</dbReference>
<dbReference type="GO" id="GO:0002939">
    <property type="term" value="P:tRNA N1-guanine methylation"/>
    <property type="evidence" value="ECO:0007669"/>
    <property type="project" value="TreeGrafter"/>
</dbReference>
<dbReference type="CDD" id="cd18080">
    <property type="entry name" value="TrmD-like"/>
    <property type="match status" value="1"/>
</dbReference>
<dbReference type="FunFam" id="1.10.1270.20:FF:000001">
    <property type="entry name" value="tRNA (guanine-N(1)-)-methyltransferase"/>
    <property type="match status" value="1"/>
</dbReference>
<dbReference type="FunFam" id="3.40.1280.10:FF:000001">
    <property type="entry name" value="tRNA (guanine-N(1)-)-methyltransferase"/>
    <property type="match status" value="1"/>
</dbReference>
<dbReference type="Gene3D" id="3.40.1280.10">
    <property type="match status" value="1"/>
</dbReference>
<dbReference type="Gene3D" id="1.10.1270.20">
    <property type="entry name" value="tRNA(m1g37)methyltransferase, domain 2"/>
    <property type="match status" value="1"/>
</dbReference>
<dbReference type="HAMAP" id="MF_00605">
    <property type="entry name" value="TrmD"/>
    <property type="match status" value="1"/>
</dbReference>
<dbReference type="InterPro" id="IPR029028">
    <property type="entry name" value="Alpha/beta_knot_MTases"/>
</dbReference>
<dbReference type="InterPro" id="IPR023148">
    <property type="entry name" value="tRNA_m1G_MeTrfase_C_sf"/>
</dbReference>
<dbReference type="InterPro" id="IPR002649">
    <property type="entry name" value="tRNA_m1G_MeTrfase_TrmD"/>
</dbReference>
<dbReference type="InterPro" id="IPR029026">
    <property type="entry name" value="tRNA_m1G_MTases_N"/>
</dbReference>
<dbReference type="InterPro" id="IPR016009">
    <property type="entry name" value="tRNA_MeTrfase_TRMD/TRM10"/>
</dbReference>
<dbReference type="NCBIfam" id="NF000648">
    <property type="entry name" value="PRK00026.1"/>
    <property type="match status" value="1"/>
</dbReference>
<dbReference type="NCBIfam" id="TIGR00088">
    <property type="entry name" value="trmD"/>
    <property type="match status" value="1"/>
</dbReference>
<dbReference type="PANTHER" id="PTHR46417">
    <property type="entry name" value="TRNA (GUANINE-N(1)-)-METHYLTRANSFERASE"/>
    <property type="match status" value="1"/>
</dbReference>
<dbReference type="PANTHER" id="PTHR46417:SF1">
    <property type="entry name" value="TRNA (GUANINE-N(1)-)-METHYLTRANSFERASE"/>
    <property type="match status" value="1"/>
</dbReference>
<dbReference type="Pfam" id="PF01746">
    <property type="entry name" value="tRNA_m1G_MT"/>
    <property type="match status" value="1"/>
</dbReference>
<dbReference type="PIRSF" id="PIRSF000386">
    <property type="entry name" value="tRNA_mtase"/>
    <property type="match status" value="1"/>
</dbReference>
<dbReference type="SUPFAM" id="SSF75217">
    <property type="entry name" value="alpha/beta knot"/>
    <property type="match status" value="1"/>
</dbReference>
<evidence type="ECO:0000255" key="1">
    <source>
        <dbReference type="HAMAP-Rule" id="MF_00605"/>
    </source>
</evidence>
<reference key="1">
    <citation type="journal article" date="2003" name="Proc. Natl. Acad. Sci. U.S.A.">
        <title>The genome sequence of Clostridium tetani, the causative agent of tetanus disease.</title>
        <authorList>
            <person name="Brueggemann H."/>
            <person name="Baeumer S."/>
            <person name="Fricke W.F."/>
            <person name="Wiezer A."/>
            <person name="Liesegang H."/>
            <person name="Decker I."/>
            <person name="Herzberg C."/>
            <person name="Martinez-Arias R."/>
            <person name="Merkl R."/>
            <person name="Henne A."/>
            <person name="Gottschalk G."/>
        </authorList>
    </citation>
    <scope>NUCLEOTIDE SEQUENCE [LARGE SCALE GENOMIC DNA]</scope>
    <source>
        <strain>Massachusetts / E88</strain>
    </source>
</reference>
<keyword id="KW-0963">Cytoplasm</keyword>
<keyword id="KW-0489">Methyltransferase</keyword>
<keyword id="KW-1185">Reference proteome</keyword>
<keyword id="KW-0949">S-adenosyl-L-methionine</keyword>
<keyword id="KW-0808">Transferase</keyword>
<keyword id="KW-0819">tRNA processing</keyword>